<feature type="chain" id="PRO_0000367173" description="UPF0173 metal-dependent hydrolase Dgeo_0136">
    <location>
        <begin position="1"/>
        <end position="226"/>
    </location>
</feature>
<evidence type="ECO:0000255" key="1">
    <source>
        <dbReference type="HAMAP-Rule" id="MF_00457"/>
    </source>
</evidence>
<evidence type="ECO:0000305" key="2"/>
<name>Y136_DEIGD</name>
<dbReference type="EMBL" id="CP000359">
    <property type="protein sequence ID" value="ABF44439.1"/>
    <property type="status" value="ALT_INIT"/>
    <property type="molecule type" value="Genomic_DNA"/>
</dbReference>
<dbReference type="RefSeq" id="WP_041220870.1">
    <property type="nucleotide sequence ID" value="NC_008025.1"/>
</dbReference>
<dbReference type="SMR" id="Q1J245"/>
<dbReference type="STRING" id="319795.Dgeo_0136"/>
<dbReference type="KEGG" id="dge:Dgeo_0136"/>
<dbReference type="eggNOG" id="COG2220">
    <property type="taxonomic scope" value="Bacteria"/>
</dbReference>
<dbReference type="HOGENOM" id="CLU_070010_4_0_0"/>
<dbReference type="Proteomes" id="UP000002431">
    <property type="component" value="Chromosome"/>
</dbReference>
<dbReference type="GO" id="GO:0016787">
    <property type="term" value="F:hydrolase activity"/>
    <property type="evidence" value="ECO:0007669"/>
    <property type="project" value="UniProtKB-UniRule"/>
</dbReference>
<dbReference type="Gene3D" id="3.60.15.10">
    <property type="entry name" value="Ribonuclease Z/Hydroxyacylglutathione hydrolase-like"/>
    <property type="match status" value="1"/>
</dbReference>
<dbReference type="HAMAP" id="MF_00457">
    <property type="entry name" value="UPF0173"/>
    <property type="match status" value="1"/>
</dbReference>
<dbReference type="InterPro" id="IPR001279">
    <property type="entry name" value="Metallo-B-lactamas"/>
</dbReference>
<dbReference type="InterPro" id="IPR036866">
    <property type="entry name" value="RibonucZ/Hydroxyglut_hydro"/>
</dbReference>
<dbReference type="InterPro" id="IPR022877">
    <property type="entry name" value="UPF0173"/>
</dbReference>
<dbReference type="InterPro" id="IPR050114">
    <property type="entry name" value="UPF0173_UPF0282_UlaG_hydrolase"/>
</dbReference>
<dbReference type="NCBIfam" id="NF001911">
    <property type="entry name" value="PRK00685.1"/>
    <property type="match status" value="1"/>
</dbReference>
<dbReference type="PANTHER" id="PTHR43546:SF3">
    <property type="entry name" value="UPF0173 METAL-DEPENDENT HYDROLASE MJ1163"/>
    <property type="match status" value="1"/>
</dbReference>
<dbReference type="PANTHER" id="PTHR43546">
    <property type="entry name" value="UPF0173 METAL-DEPENDENT HYDROLASE MJ1163-RELATED"/>
    <property type="match status" value="1"/>
</dbReference>
<dbReference type="Pfam" id="PF12706">
    <property type="entry name" value="Lactamase_B_2"/>
    <property type="match status" value="1"/>
</dbReference>
<dbReference type="SMART" id="SM00849">
    <property type="entry name" value="Lactamase_B"/>
    <property type="match status" value="1"/>
</dbReference>
<dbReference type="SUPFAM" id="SSF56281">
    <property type="entry name" value="Metallo-hydrolase/oxidoreductase"/>
    <property type="match status" value="1"/>
</dbReference>
<proteinExistence type="inferred from homology"/>
<reference key="1">
    <citation type="submission" date="2006-04" db="EMBL/GenBank/DDBJ databases">
        <title>Complete sequence of chromosome of Deinococcus geothermalis DSM 11300.</title>
        <authorList>
            <person name="Copeland A."/>
            <person name="Lucas S."/>
            <person name="Lapidus A."/>
            <person name="Barry K."/>
            <person name="Detter J.C."/>
            <person name="Glavina del Rio T."/>
            <person name="Hammon N."/>
            <person name="Israni S."/>
            <person name="Dalin E."/>
            <person name="Tice H."/>
            <person name="Pitluck S."/>
            <person name="Brettin T."/>
            <person name="Bruce D."/>
            <person name="Han C."/>
            <person name="Tapia R."/>
            <person name="Saunders E."/>
            <person name="Gilna P."/>
            <person name="Schmutz J."/>
            <person name="Larimer F."/>
            <person name="Land M."/>
            <person name="Hauser L."/>
            <person name="Kyrpides N."/>
            <person name="Kim E."/>
            <person name="Daly M.J."/>
            <person name="Fredrickson J.K."/>
            <person name="Makarova K.S."/>
            <person name="Gaidamakova E.K."/>
            <person name="Zhai M."/>
            <person name="Richardson P."/>
        </authorList>
    </citation>
    <scope>NUCLEOTIDE SEQUENCE [LARGE SCALE GENOMIC DNA]</scope>
    <source>
        <strain>DSM 11300 / CIP 105573 / AG-3a</strain>
    </source>
</reference>
<organism>
    <name type="scientific">Deinococcus geothermalis (strain DSM 11300 / CIP 105573 / AG-3a)</name>
    <dbReference type="NCBI Taxonomy" id="319795"/>
    <lineage>
        <taxon>Bacteria</taxon>
        <taxon>Thermotogati</taxon>
        <taxon>Deinococcota</taxon>
        <taxon>Deinococci</taxon>
        <taxon>Deinococcales</taxon>
        <taxon>Deinococcaceae</taxon>
        <taxon>Deinococcus</taxon>
    </lineage>
</organism>
<accession>Q1J245</accession>
<gene>
    <name type="ordered locus">Dgeo_0136</name>
</gene>
<protein>
    <recommendedName>
        <fullName evidence="1">UPF0173 metal-dependent hydrolase Dgeo_0136</fullName>
    </recommendedName>
</protein>
<comment type="similarity">
    <text evidence="1">Belongs to the UPF0173 family.</text>
</comment>
<comment type="sequence caution" evidence="2">
    <conflict type="erroneous initiation">
        <sequence resource="EMBL-CDS" id="ABF44439"/>
    </conflict>
</comment>
<keyword id="KW-0378">Hydrolase</keyword>
<sequence>MQIRFLGQSAFLLTSGVHQLLIDPFIAGNPKSPVTLEEALGWKVDAVLISHAHGDHWGNALDFGRAGVPVIGTAEIGGYAQKNGAQNAIGMNIGGTYRAPWGSVTLTPAWHSSSFPDGTYGGMPTGLIIEMDGVRVYHAGDTNLFSDMRLIGDRGLDVALLPIGDHYTMGPEEAARTLELLRPRVAIPMHYGTFPVLTGDPQVFAREGRARGVDVRVLAPGETAEV</sequence>